<evidence type="ECO:0000255" key="1">
    <source>
        <dbReference type="HAMAP-Rule" id="MF_00435"/>
    </source>
</evidence>
<evidence type="ECO:0000255" key="2">
    <source>
        <dbReference type="PROSITE-ProRule" id="PRU01197"/>
    </source>
</evidence>
<evidence type="ECO:0000255" key="3">
    <source>
        <dbReference type="PROSITE-ProRule" id="PRU01198"/>
    </source>
</evidence>
<gene>
    <name evidence="1" type="primary">ilvC</name>
    <name type="ordered locus">TERTU_1066</name>
</gene>
<protein>
    <recommendedName>
        <fullName evidence="1">Ketol-acid reductoisomerase (NADP(+))</fullName>
        <shortName evidence="1">KARI</shortName>
        <ecNumber evidence="1">1.1.1.86</ecNumber>
    </recommendedName>
    <alternativeName>
        <fullName evidence="1">Acetohydroxy-acid isomeroreductase</fullName>
        <shortName evidence="1">AHIR</shortName>
    </alternativeName>
    <alternativeName>
        <fullName evidence="1">Alpha-keto-beta-hydroxylacyl reductoisomerase</fullName>
    </alternativeName>
    <alternativeName>
        <fullName evidence="1">Ketol-acid reductoisomerase type 1</fullName>
    </alternativeName>
    <alternativeName>
        <fullName evidence="1">Ketol-acid reductoisomerase type I</fullName>
    </alternativeName>
</protein>
<feature type="chain" id="PRO_1000206094" description="Ketol-acid reductoisomerase (NADP(+))">
    <location>
        <begin position="1"/>
        <end position="338"/>
    </location>
</feature>
<feature type="domain" description="KARI N-terminal Rossmann" evidence="2">
    <location>
        <begin position="1"/>
        <end position="181"/>
    </location>
</feature>
<feature type="domain" description="KARI C-terminal knotted" evidence="3">
    <location>
        <begin position="182"/>
        <end position="327"/>
    </location>
</feature>
<feature type="active site" evidence="1">
    <location>
        <position position="107"/>
    </location>
</feature>
<feature type="binding site" evidence="1">
    <location>
        <begin position="24"/>
        <end position="27"/>
    </location>
    <ligand>
        <name>NADP(+)</name>
        <dbReference type="ChEBI" id="CHEBI:58349"/>
    </ligand>
</feature>
<feature type="binding site" evidence="1">
    <location>
        <position position="47"/>
    </location>
    <ligand>
        <name>NADP(+)</name>
        <dbReference type="ChEBI" id="CHEBI:58349"/>
    </ligand>
</feature>
<feature type="binding site" evidence="1">
    <location>
        <position position="50"/>
    </location>
    <ligand>
        <name>NADP(+)</name>
        <dbReference type="ChEBI" id="CHEBI:58349"/>
    </ligand>
</feature>
<feature type="binding site" evidence="1">
    <location>
        <position position="52"/>
    </location>
    <ligand>
        <name>NADP(+)</name>
        <dbReference type="ChEBI" id="CHEBI:58349"/>
    </ligand>
</feature>
<feature type="binding site" evidence="1">
    <location>
        <begin position="82"/>
        <end position="85"/>
    </location>
    <ligand>
        <name>NADP(+)</name>
        <dbReference type="ChEBI" id="CHEBI:58349"/>
    </ligand>
</feature>
<feature type="binding site" evidence="1">
    <location>
        <position position="133"/>
    </location>
    <ligand>
        <name>NADP(+)</name>
        <dbReference type="ChEBI" id="CHEBI:58349"/>
    </ligand>
</feature>
<feature type="binding site" evidence="1">
    <location>
        <position position="190"/>
    </location>
    <ligand>
        <name>Mg(2+)</name>
        <dbReference type="ChEBI" id="CHEBI:18420"/>
        <label>1</label>
    </ligand>
</feature>
<feature type="binding site" evidence="1">
    <location>
        <position position="190"/>
    </location>
    <ligand>
        <name>Mg(2+)</name>
        <dbReference type="ChEBI" id="CHEBI:18420"/>
        <label>2</label>
    </ligand>
</feature>
<feature type="binding site" evidence="1">
    <location>
        <position position="194"/>
    </location>
    <ligand>
        <name>Mg(2+)</name>
        <dbReference type="ChEBI" id="CHEBI:18420"/>
        <label>1</label>
    </ligand>
</feature>
<feature type="binding site" evidence="1">
    <location>
        <position position="226"/>
    </location>
    <ligand>
        <name>Mg(2+)</name>
        <dbReference type="ChEBI" id="CHEBI:18420"/>
        <label>2</label>
    </ligand>
</feature>
<feature type="binding site" evidence="1">
    <location>
        <position position="230"/>
    </location>
    <ligand>
        <name>Mg(2+)</name>
        <dbReference type="ChEBI" id="CHEBI:18420"/>
        <label>2</label>
    </ligand>
</feature>
<feature type="binding site" evidence="1">
    <location>
        <position position="251"/>
    </location>
    <ligand>
        <name>substrate</name>
    </ligand>
</feature>
<comment type="function">
    <text evidence="1">Involved in the biosynthesis of branched-chain amino acids (BCAA). Catalyzes an alkyl-migration followed by a ketol-acid reduction of (S)-2-acetolactate (S2AL) to yield (R)-2,3-dihydroxy-isovalerate. In the isomerase reaction, S2AL is rearranged via a Mg-dependent methyl migration to produce 3-hydroxy-3-methyl-2-ketobutyrate (HMKB). In the reductase reaction, this 2-ketoacid undergoes a metal-dependent reduction by NADPH to yield (R)-2,3-dihydroxy-isovalerate.</text>
</comment>
<comment type="catalytic activity">
    <reaction evidence="1">
        <text>(2R)-2,3-dihydroxy-3-methylbutanoate + NADP(+) = (2S)-2-acetolactate + NADPH + H(+)</text>
        <dbReference type="Rhea" id="RHEA:22068"/>
        <dbReference type="ChEBI" id="CHEBI:15378"/>
        <dbReference type="ChEBI" id="CHEBI:49072"/>
        <dbReference type="ChEBI" id="CHEBI:57783"/>
        <dbReference type="ChEBI" id="CHEBI:58349"/>
        <dbReference type="ChEBI" id="CHEBI:58476"/>
        <dbReference type="EC" id="1.1.1.86"/>
    </reaction>
</comment>
<comment type="catalytic activity">
    <reaction evidence="1">
        <text>(2R,3R)-2,3-dihydroxy-3-methylpentanoate + NADP(+) = (S)-2-ethyl-2-hydroxy-3-oxobutanoate + NADPH + H(+)</text>
        <dbReference type="Rhea" id="RHEA:13493"/>
        <dbReference type="ChEBI" id="CHEBI:15378"/>
        <dbReference type="ChEBI" id="CHEBI:49256"/>
        <dbReference type="ChEBI" id="CHEBI:49258"/>
        <dbReference type="ChEBI" id="CHEBI:57783"/>
        <dbReference type="ChEBI" id="CHEBI:58349"/>
        <dbReference type="EC" id="1.1.1.86"/>
    </reaction>
</comment>
<comment type="cofactor">
    <cofactor evidence="1">
        <name>Mg(2+)</name>
        <dbReference type="ChEBI" id="CHEBI:18420"/>
    </cofactor>
    <text evidence="1">Binds 2 magnesium ions per subunit.</text>
</comment>
<comment type="pathway">
    <text evidence="1">Amino-acid biosynthesis; L-isoleucine biosynthesis; L-isoleucine from 2-oxobutanoate: step 2/4.</text>
</comment>
<comment type="pathway">
    <text evidence="1">Amino-acid biosynthesis; L-valine biosynthesis; L-valine from pyruvate: step 2/4.</text>
</comment>
<comment type="similarity">
    <text evidence="1">Belongs to the ketol-acid reductoisomerase family.</text>
</comment>
<accession>C5BQZ6</accession>
<organism>
    <name type="scientific">Teredinibacter turnerae (strain ATCC 39867 / T7901)</name>
    <dbReference type="NCBI Taxonomy" id="377629"/>
    <lineage>
        <taxon>Bacteria</taxon>
        <taxon>Pseudomonadati</taxon>
        <taxon>Pseudomonadota</taxon>
        <taxon>Gammaproteobacteria</taxon>
        <taxon>Cellvibrionales</taxon>
        <taxon>Cellvibrionaceae</taxon>
        <taxon>Teredinibacter</taxon>
    </lineage>
</organism>
<keyword id="KW-0028">Amino-acid biosynthesis</keyword>
<keyword id="KW-0100">Branched-chain amino acid biosynthesis</keyword>
<keyword id="KW-0460">Magnesium</keyword>
<keyword id="KW-0479">Metal-binding</keyword>
<keyword id="KW-0521">NADP</keyword>
<keyword id="KW-0560">Oxidoreductase</keyword>
<keyword id="KW-1185">Reference proteome</keyword>
<proteinExistence type="inferred from homology"/>
<sequence>MQVYYDKDCDLSIIQGKKVAVIGYGSQGHAHACNLNDSGVDVTVGLRPGSSSIAKAEAHGLKVSDVPAAVAAADVVMILTPDEFQSQLYKNEIEPNLKEGATLAFAHGFAIHYNQVVPRKDLDVIMIAPKAPGHTVRSEFVKGGGIPDLVAIFQDASGNAKDVALSYACGVGGGRTGIIETTFKDETETDLFGEQAVLCGGAVELVKMGFETLTEAGYAPEMAYFECLHELKLIVDLMYEGGIANMNYSISNNAEFGEYVTGPRVINEESRKAMRQALKDIQDGEYAKNFILEGQTNYPSMTAHRRNNAAHPIEQVGEKLRAMMPWIESNKIIDKSKN</sequence>
<dbReference type="EC" id="1.1.1.86" evidence="1"/>
<dbReference type="EMBL" id="CP001614">
    <property type="protein sequence ID" value="ACR12514.1"/>
    <property type="molecule type" value="Genomic_DNA"/>
</dbReference>
<dbReference type="RefSeq" id="WP_015818626.1">
    <property type="nucleotide sequence ID" value="NC_012997.1"/>
</dbReference>
<dbReference type="SMR" id="C5BQZ6"/>
<dbReference type="STRING" id="377629.TERTU_1066"/>
<dbReference type="KEGG" id="ttu:TERTU_1066"/>
<dbReference type="eggNOG" id="COG0059">
    <property type="taxonomic scope" value="Bacteria"/>
</dbReference>
<dbReference type="HOGENOM" id="CLU_033821_0_1_6"/>
<dbReference type="OrthoDB" id="9804088at2"/>
<dbReference type="UniPathway" id="UPA00047">
    <property type="reaction ID" value="UER00056"/>
</dbReference>
<dbReference type="UniPathway" id="UPA00049">
    <property type="reaction ID" value="UER00060"/>
</dbReference>
<dbReference type="Proteomes" id="UP000009080">
    <property type="component" value="Chromosome"/>
</dbReference>
<dbReference type="GO" id="GO:0005829">
    <property type="term" value="C:cytosol"/>
    <property type="evidence" value="ECO:0007669"/>
    <property type="project" value="TreeGrafter"/>
</dbReference>
<dbReference type="GO" id="GO:0004455">
    <property type="term" value="F:ketol-acid reductoisomerase activity"/>
    <property type="evidence" value="ECO:0007669"/>
    <property type="project" value="UniProtKB-UniRule"/>
</dbReference>
<dbReference type="GO" id="GO:0000287">
    <property type="term" value="F:magnesium ion binding"/>
    <property type="evidence" value="ECO:0007669"/>
    <property type="project" value="UniProtKB-UniRule"/>
</dbReference>
<dbReference type="GO" id="GO:0050661">
    <property type="term" value="F:NADP binding"/>
    <property type="evidence" value="ECO:0007669"/>
    <property type="project" value="InterPro"/>
</dbReference>
<dbReference type="GO" id="GO:0009097">
    <property type="term" value="P:isoleucine biosynthetic process"/>
    <property type="evidence" value="ECO:0007669"/>
    <property type="project" value="UniProtKB-UniRule"/>
</dbReference>
<dbReference type="GO" id="GO:0009099">
    <property type="term" value="P:L-valine biosynthetic process"/>
    <property type="evidence" value="ECO:0007669"/>
    <property type="project" value="UniProtKB-UniRule"/>
</dbReference>
<dbReference type="FunFam" id="3.40.50.720:FF:000023">
    <property type="entry name" value="Ketol-acid reductoisomerase (NADP(+))"/>
    <property type="match status" value="1"/>
</dbReference>
<dbReference type="Gene3D" id="6.10.240.10">
    <property type="match status" value="1"/>
</dbReference>
<dbReference type="Gene3D" id="3.40.50.720">
    <property type="entry name" value="NAD(P)-binding Rossmann-like Domain"/>
    <property type="match status" value="1"/>
</dbReference>
<dbReference type="HAMAP" id="MF_00435">
    <property type="entry name" value="IlvC"/>
    <property type="match status" value="1"/>
</dbReference>
<dbReference type="InterPro" id="IPR008927">
    <property type="entry name" value="6-PGluconate_DH-like_C_sf"/>
</dbReference>
<dbReference type="InterPro" id="IPR013023">
    <property type="entry name" value="KARI"/>
</dbReference>
<dbReference type="InterPro" id="IPR000506">
    <property type="entry name" value="KARI_C"/>
</dbReference>
<dbReference type="InterPro" id="IPR013116">
    <property type="entry name" value="KARI_N"/>
</dbReference>
<dbReference type="InterPro" id="IPR014359">
    <property type="entry name" value="KARI_prok"/>
</dbReference>
<dbReference type="InterPro" id="IPR036291">
    <property type="entry name" value="NAD(P)-bd_dom_sf"/>
</dbReference>
<dbReference type="NCBIfam" id="TIGR00465">
    <property type="entry name" value="ilvC"/>
    <property type="match status" value="1"/>
</dbReference>
<dbReference type="NCBIfam" id="NF004017">
    <property type="entry name" value="PRK05479.1"/>
    <property type="match status" value="1"/>
</dbReference>
<dbReference type="NCBIfam" id="NF009940">
    <property type="entry name" value="PRK13403.1"/>
    <property type="match status" value="1"/>
</dbReference>
<dbReference type="PANTHER" id="PTHR21371">
    <property type="entry name" value="KETOL-ACID REDUCTOISOMERASE, MITOCHONDRIAL"/>
    <property type="match status" value="1"/>
</dbReference>
<dbReference type="PANTHER" id="PTHR21371:SF1">
    <property type="entry name" value="KETOL-ACID REDUCTOISOMERASE, MITOCHONDRIAL"/>
    <property type="match status" value="1"/>
</dbReference>
<dbReference type="Pfam" id="PF01450">
    <property type="entry name" value="KARI_C"/>
    <property type="match status" value="1"/>
</dbReference>
<dbReference type="Pfam" id="PF07991">
    <property type="entry name" value="KARI_N"/>
    <property type="match status" value="1"/>
</dbReference>
<dbReference type="PIRSF" id="PIRSF000116">
    <property type="entry name" value="IlvC_gammaproteo"/>
    <property type="match status" value="1"/>
</dbReference>
<dbReference type="SUPFAM" id="SSF48179">
    <property type="entry name" value="6-phosphogluconate dehydrogenase C-terminal domain-like"/>
    <property type="match status" value="1"/>
</dbReference>
<dbReference type="SUPFAM" id="SSF51735">
    <property type="entry name" value="NAD(P)-binding Rossmann-fold domains"/>
    <property type="match status" value="1"/>
</dbReference>
<dbReference type="PROSITE" id="PS51851">
    <property type="entry name" value="KARI_C"/>
    <property type="match status" value="1"/>
</dbReference>
<dbReference type="PROSITE" id="PS51850">
    <property type="entry name" value="KARI_N"/>
    <property type="match status" value="1"/>
</dbReference>
<reference key="1">
    <citation type="journal article" date="2009" name="PLoS ONE">
        <title>The complete genome of Teredinibacter turnerae T7901: an intracellular endosymbiont of marine wood-boring bivalves (shipworms).</title>
        <authorList>
            <person name="Yang J.C."/>
            <person name="Madupu R."/>
            <person name="Durkin A.S."/>
            <person name="Ekborg N.A."/>
            <person name="Pedamallu C.S."/>
            <person name="Hostetler J.B."/>
            <person name="Radune D."/>
            <person name="Toms B.S."/>
            <person name="Henrissat B."/>
            <person name="Coutinho P.M."/>
            <person name="Schwarz S."/>
            <person name="Field L."/>
            <person name="Trindade-Silva A.E."/>
            <person name="Soares C.A.G."/>
            <person name="Elshahawi S."/>
            <person name="Hanora A."/>
            <person name="Schmidt E.W."/>
            <person name="Haygood M.G."/>
            <person name="Posfai J."/>
            <person name="Benner J."/>
            <person name="Madinger C."/>
            <person name="Nove J."/>
            <person name="Anton B."/>
            <person name="Chaudhary K."/>
            <person name="Foster J."/>
            <person name="Holman A."/>
            <person name="Kumar S."/>
            <person name="Lessard P.A."/>
            <person name="Luyten Y.A."/>
            <person name="Slatko B."/>
            <person name="Wood N."/>
            <person name="Wu B."/>
            <person name="Teplitski M."/>
            <person name="Mougous J.D."/>
            <person name="Ward N."/>
            <person name="Eisen J.A."/>
            <person name="Badger J.H."/>
            <person name="Distel D.L."/>
        </authorList>
    </citation>
    <scope>NUCLEOTIDE SEQUENCE [LARGE SCALE GENOMIC DNA]</scope>
    <source>
        <strain>ATCC 39867 / T7901</strain>
    </source>
</reference>
<name>ILVC_TERTT</name>